<sequence>MEKIFKVTSDSGIHARPATLLVNTASKFGSDINLEYNGKNVNLKSIMGVMSLGIQQNAEIKITANGDDAAQALAAIEETMKNEGLGE</sequence>
<gene>
    <name type="primary">ptsH</name>
</gene>
<name>PTHP_BACTI</name>
<feature type="chain" id="PRO_0000344795" description="Phosphocarrier protein HPr">
    <location>
        <begin position="1"/>
        <end position="87"/>
    </location>
</feature>
<feature type="domain" description="HPr" evidence="2">
    <location>
        <begin position="1"/>
        <end position="87"/>
    </location>
</feature>
<feature type="active site" description="Pros-phosphohistidine intermediate; alternate" evidence="2">
    <location>
        <position position="14"/>
    </location>
</feature>
<feature type="modified residue" description="Tele-phosphohistidine; alternate" evidence="3">
    <location>
        <position position="14"/>
    </location>
</feature>
<feature type="modified residue" description="Phosphoserine; by HPrK/P" evidence="2 4">
    <location>
        <position position="45"/>
    </location>
</feature>
<feature type="mutagenesis site" description="Not histidine-phosphorylated." evidence="3">
    <original>H</original>
    <variation>A</variation>
    <location>
        <position position="14"/>
    </location>
</feature>
<feature type="mutagenesis site" description="Not serine-phosphorylated. Absence of glucose-induced cry4A expression repression. 60 to 70% reduction in the sporulation efficiency." evidence="4">
    <original>S</original>
    <variation>A</variation>
    <location>
        <position position="45"/>
    </location>
</feature>
<protein>
    <recommendedName>
        <fullName>Phosphocarrier protein HPr</fullName>
    </recommendedName>
</protein>
<keyword id="KW-0963">Cytoplasm</keyword>
<keyword id="KW-0903">Direct protein sequencing</keyword>
<keyword id="KW-0597">Phosphoprotein</keyword>
<keyword id="KW-0598">Phosphotransferase system</keyword>
<keyword id="KW-0762">Sugar transport</keyword>
<keyword id="KW-0804">Transcription</keyword>
<keyword id="KW-0805">Transcription regulation</keyword>
<keyword id="KW-0813">Transport</keyword>
<evidence type="ECO:0000250" key="1"/>
<evidence type="ECO:0000255" key="2">
    <source>
        <dbReference type="PROSITE-ProRule" id="PRU00681"/>
    </source>
</evidence>
<evidence type="ECO:0000269" key="3">
    <source>
    </source>
</evidence>
<evidence type="ECO:0000269" key="4">
    <source>
    </source>
</evidence>
<evidence type="ECO:0000305" key="5"/>
<accession>Q9F166</accession>
<dbReference type="EMBL" id="AF117385">
    <property type="protein sequence ID" value="AAG49026.1"/>
    <property type="molecule type" value="Genomic_DNA"/>
</dbReference>
<dbReference type="RefSeq" id="WP_000411080.1">
    <property type="nucleotide sequence ID" value="NZ_VEIF01000004.1"/>
</dbReference>
<dbReference type="SMR" id="Q9F166"/>
<dbReference type="iPTMnet" id="Q9F166"/>
<dbReference type="GeneID" id="92799676"/>
<dbReference type="GO" id="GO:0005737">
    <property type="term" value="C:cytoplasm"/>
    <property type="evidence" value="ECO:0007669"/>
    <property type="project" value="UniProtKB-SubCell"/>
</dbReference>
<dbReference type="GO" id="GO:0009401">
    <property type="term" value="P:phosphoenolpyruvate-dependent sugar phosphotransferase system"/>
    <property type="evidence" value="ECO:0007669"/>
    <property type="project" value="UniProtKB-KW"/>
</dbReference>
<dbReference type="CDD" id="cd00367">
    <property type="entry name" value="PTS-HPr_like"/>
    <property type="match status" value="1"/>
</dbReference>
<dbReference type="FunFam" id="3.30.1340.10:FF:000003">
    <property type="entry name" value="Phosphocarrier protein HPr"/>
    <property type="match status" value="1"/>
</dbReference>
<dbReference type="Gene3D" id="3.30.1340.10">
    <property type="entry name" value="HPr-like"/>
    <property type="match status" value="1"/>
</dbReference>
<dbReference type="InterPro" id="IPR050399">
    <property type="entry name" value="HPr"/>
</dbReference>
<dbReference type="InterPro" id="IPR000032">
    <property type="entry name" value="HPr-like"/>
</dbReference>
<dbReference type="InterPro" id="IPR035895">
    <property type="entry name" value="HPr-like_sf"/>
</dbReference>
<dbReference type="InterPro" id="IPR001020">
    <property type="entry name" value="PTS_HPr_His_P_site"/>
</dbReference>
<dbReference type="InterPro" id="IPR002114">
    <property type="entry name" value="PTS_HPr_Ser_P_site"/>
</dbReference>
<dbReference type="NCBIfam" id="NF010352">
    <property type="entry name" value="PRK13780.1"/>
    <property type="match status" value="1"/>
</dbReference>
<dbReference type="NCBIfam" id="TIGR01003">
    <property type="entry name" value="PTS_HPr_family"/>
    <property type="match status" value="1"/>
</dbReference>
<dbReference type="PANTHER" id="PTHR33705">
    <property type="entry name" value="PHOSPHOCARRIER PROTEIN HPR"/>
    <property type="match status" value="1"/>
</dbReference>
<dbReference type="PANTHER" id="PTHR33705:SF2">
    <property type="entry name" value="PHOSPHOCARRIER PROTEIN NPR"/>
    <property type="match status" value="1"/>
</dbReference>
<dbReference type="Pfam" id="PF00381">
    <property type="entry name" value="PTS-HPr"/>
    <property type="match status" value="1"/>
</dbReference>
<dbReference type="PRINTS" id="PR00107">
    <property type="entry name" value="PHOSPHOCPHPR"/>
</dbReference>
<dbReference type="SUPFAM" id="SSF55594">
    <property type="entry name" value="HPr-like"/>
    <property type="match status" value="1"/>
</dbReference>
<dbReference type="PROSITE" id="PS51350">
    <property type="entry name" value="PTS_HPR_DOM"/>
    <property type="match status" value="1"/>
</dbReference>
<dbReference type="PROSITE" id="PS00369">
    <property type="entry name" value="PTS_HPR_HIS"/>
    <property type="match status" value="1"/>
</dbReference>
<dbReference type="PROSITE" id="PS00589">
    <property type="entry name" value="PTS_HPR_SER"/>
    <property type="match status" value="1"/>
</dbReference>
<proteinExistence type="evidence at protein level"/>
<organism>
    <name type="scientific">Bacillus thuringiensis subsp. israelensis</name>
    <dbReference type="NCBI Taxonomy" id="1430"/>
    <lineage>
        <taxon>Bacteria</taxon>
        <taxon>Bacillati</taxon>
        <taxon>Bacillota</taxon>
        <taxon>Bacilli</taxon>
        <taxon>Bacillales</taxon>
        <taxon>Bacillaceae</taxon>
        <taxon>Bacillus</taxon>
        <taxon>Bacillus cereus group</taxon>
    </lineage>
</organism>
<comment type="function">
    <text>General (non sugar-specific) component of the phosphoenolpyruvate-dependent sugar phosphotransferase system (sugar PTS). This major carbohydrate active-transport system catalyzes the phosphorylation of incoming sugar substrates concomitantly with their translocation across the cell membrane. The phosphoryl group from phosphoenolpyruvate (PEP) is transferred to the phosphoryl carrier protein HPr by enzyme I. Phospho-HPr then transfers it to the PTS EIIA domain.</text>
</comment>
<comment type="function">
    <text>P-Ser-HPr interacts with the catabolite control protein A (CcpA), forming a complex that binds to DNA at the catabolite response elements cre, operator sites preceding a large number of catabolite-regulated genes. Thus, P-Ser-HPr is a corepressor in carbon catabolite repression (CCR), a mechanism that allows bacteria to coordinate and optimize the utilization of available carbon sources. P-Ser-HPr mediates glucose catabolite repression of cry4A toxin expression.</text>
</comment>
<comment type="activity regulation">
    <text evidence="1">Phosphorylation on Ser-45 inhibits the phosphoryl transfer from enzyme I to HPr.</text>
</comment>
<comment type="subcellular location">
    <subcellularLocation>
        <location evidence="1">Cytoplasm</location>
    </subcellularLocation>
</comment>
<comment type="PTM">
    <text evidence="3 4">The form phosphorylated at the tele nitrogen (N(epsilon)2), instead of the expected pros nitrogen (N(delta)1), of His-14 is not able to transfer its phosphoryl group to the B.subtilis EIIA-Glc domain. This form may be inactive in PTS-catalyzed sugar transport or target an as yet unknown acceptor molecule in an alternative metabolic process.</text>
</comment>
<comment type="similarity">
    <text evidence="5">Belongs to the HPr family.</text>
</comment>
<reference key="1">
    <citation type="journal article" date="2001" name="Eur. J. Biochem.">
        <title>The ptsH gene from Bacillus thuringiensis israelensis. Characterization of a new phosphorylation site on the protein HPr.</title>
        <authorList>
            <person name="Khan S.R."/>
            <person name="Deutscher J."/>
            <person name="Vishwakarma R.A."/>
            <person name="Monedero V."/>
            <person name="Banerjee-Bhatnagar N."/>
        </authorList>
    </citation>
    <scope>NUCLEOTIDE SEQUENCE [GENOMIC DNA]</scope>
    <scope>PROTEIN SEQUENCE OF 1-10</scope>
    <scope>FUNCTION</scope>
    <scope>ACTIVE SITE HIS-14</scope>
    <scope>PHOSPHORYLATION AT HIS-14</scope>
    <scope>MUTAGENESIS OF HIS-14</scope>
    <source>
        <strain>ATCC 35646 / USDA HD522</strain>
    </source>
</reference>
<reference key="2">
    <citation type="journal article" date="2002" name="J. Bacteriol.">
        <title>Loss of catabolite repression function of HPr, the phosphocarrier protein of the bacterial phosphotransferase system, affects expression of the cry4A toxin gene in Bacillus thuringiensis subsp. israelensis.</title>
        <authorList>
            <person name="Khan S.R."/>
            <person name="Banerjee-Bhatnagar N."/>
        </authorList>
    </citation>
    <scope>FUNCTION</scope>
    <scope>PHOSPHORYLATION AT SER-45</scope>
    <scope>MUTAGENESIS OF SER-45</scope>
    <source>
        <strain>ATCC 35646 / USDA HD522</strain>
    </source>
</reference>